<evidence type="ECO:0000250" key="1"/>
<evidence type="ECO:0000250" key="2">
    <source>
        <dbReference type="UniProtKB" id="P53778"/>
    </source>
</evidence>
<evidence type="ECO:0000255" key="3">
    <source>
        <dbReference type="PROSITE-ProRule" id="PRU00159"/>
    </source>
</evidence>
<evidence type="ECO:0000269" key="4">
    <source>
    </source>
</evidence>
<evidence type="ECO:0000269" key="5">
    <source>
    </source>
</evidence>
<evidence type="ECO:0000269" key="6">
    <source>
    </source>
</evidence>
<evidence type="ECO:0000269" key="7">
    <source>
    </source>
</evidence>
<evidence type="ECO:0000269" key="8">
    <source>
    </source>
</evidence>
<evidence type="ECO:0000305" key="9"/>
<accession>Q63538</accession>
<protein>
    <recommendedName>
        <fullName>Mitogen-activated protein kinase 12</fullName>
        <shortName>MAP kinase 12</shortName>
        <shortName>MAPK 12</shortName>
        <ecNumber>2.7.11.24</ecNumber>
    </recommendedName>
    <alternativeName>
        <fullName>Extracellular signal-regulated kinase 6</fullName>
        <shortName>ERK-6</shortName>
    </alternativeName>
    <alternativeName>
        <fullName>Mitogen-activated protein kinase p38 gamma</fullName>
        <shortName>MAP kinase p38 gamma</shortName>
    </alternativeName>
    <alternativeName>
        <fullName>Stress-activated protein kinase 3</fullName>
    </alternativeName>
</protein>
<proteinExistence type="evidence at protein level"/>
<dbReference type="EC" id="2.7.11.24"/>
<dbReference type="EMBL" id="X96488">
    <property type="protein sequence ID" value="CAA65342.1"/>
    <property type="molecule type" value="mRNA"/>
</dbReference>
<dbReference type="PIR" id="S68680">
    <property type="entry name" value="S68680"/>
</dbReference>
<dbReference type="RefSeq" id="NP_068514.1">
    <property type="nucleotide sequence ID" value="NM_021746.2"/>
</dbReference>
<dbReference type="SMR" id="Q63538"/>
<dbReference type="BioGRID" id="248795">
    <property type="interactions" value="2"/>
</dbReference>
<dbReference type="DIP" id="DIP-37835N"/>
<dbReference type="FunCoup" id="Q63538">
    <property type="interactions" value="1030"/>
</dbReference>
<dbReference type="IntAct" id="Q63538">
    <property type="interactions" value="3"/>
</dbReference>
<dbReference type="STRING" id="10116.ENSRNOP00000046455"/>
<dbReference type="iPTMnet" id="Q63538"/>
<dbReference type="PhosphoSitePlus" id="Q63538"/>
<dbReference type="jPOST" id="Q63538"/>
<dbReference type="PaxDb" id="10116-ENSRNOP00000046455"/>
<dbReference type="Ensembl" id="ENSRNOT00000044376.5">
    <property type="protein sequence ID" value="ENSRNOP00000046455.3"/>
    <property type="gene ID" value="ENSRNOG00000031233.6"/>
</dbReference>
<dbReference type="GeneID" id="60352"/>
<dbReference type="KEGG" id="rno:60352"/>
<dbReference type="AGR" id="RGD:70975"/>
<dbReference type="CTD" id="6300"/>
<dbReference type="RGD" id="70975">
    <property type="gene designation" value="Mapk12"/>
</dbReference>
<dbReference type="eggNOG" id="KOG0660">
    <property type="taxonomic scope" value="Eukaryota"/>
</dbReference>
<dbReference type="GeneTree" id="ENSGT00940000156189"/>
<dbReference type="HOGENOM" id="CLU_000288_181_1_1"/>
<dbReference type="InParanoid" id="Q63538"/>
<dbReference type="OMA" id="IAMMRFF"/>
<dbReference type="OrthoDB" id="192887at2759"/>
<dbReference type="PhylomeDB" id="Q63538"/>
<dbReference type="TreeFam" id="TF105100"/>
<dbReference type="Reactome" id="R-RNO-168638">
    <property type="pathway name" value="NOD1/2 Signaling Pathway"/>
</dbReference>
<dbReference type="Reactome" id="R-RNO-4420097">
    <property type="pathway name" value="VEGFA-VEGFR2 Pathway"/>
</dbReference>
<dbReference type="Reactome" id="R-RNO-525793">
    <property type="pathway name" value="Myogenesis"/>
</dbReference>
<dbReference type="Reactome" id="R-RNO-5675221">
    <property type="pathway name" value="Negative regulation of MAPK pathway"/>
</dbReference>
<dbReference type="PRO" id="PR:Q63538"/>
<dbReference type="Proteomes" id="UP000002494">
    <property type="component" value="Chromosome 7"/>
</dbReference>
<dbReference type="Bgee" id="ENSRNOG00000031233">
    <property type="expression patterns" value="Expressed in skeletal muscle tissue and 20 other cell types or tissues"/>
</dbReference>
<dbReference type="GO" id="GO:0005737">
    <property type="term" value="C:cytoplasm"/>
    <property type="evidence" value="ECO:0000314"/>
    <property type="project" value="UniProtKB"/>
</dbReference>
<dbReference type="GO" id="GO:0005739">
    <property type="term" value="C:mitochondrion"/>
    <property type="evidence" value="ECO:0007669"/>
    <property type="project" value="UniProtKB-SubCell"/>
</dbReference>
<dbReference type="GO" id="GO:0005634">
    <property type="term" value="C:nucleus"/>
    <property type="evidence" value="ECO:0000318"/>
    <property type="project" value="GO_Central"/>
</dbReference>
<dbReference type="GO" id="GO:0005524">
    <property type="term" value="F:ATP binding"/>
    <property type="evidence" value="ECO:0000314"/>
    <property type="project" value="RGD"/>
</dbReference>
<dbReference type="GO" id="GO:0000287">
    <property type="term" value="F:magnesium ion binding"/>
    <property type="evidence" value="ECO:0000266"/>
    <property type="project" value="RGD"/>
</dbReference>
<dbReference type="GO" id="GO:0004707">
    <property type="term" value="F:MAP kinase activity"/>
    <property type="evidence" value="ECO:0000314"/>
    <property type="project" value="RGD"/>
</dbReference>
<dbReference type="GO" id="GO:0106310">
    <property type="term" value="F:protein serine kinase activity"/>
    <property type="evidence" value="ECO:0007669"/>
    <property type="project" value="RHEA"/>
</dbReference>
<dbReference type="GO" id="GO:0004674">
    <property type="term" value="F:protein serine/threonine kinase activity"/>
    <property type="evidence" value="ECO:0000314"/>
    <property type="project" value="UniProtKB"/>
</dbReference>
<dbReference type="GO" id="GO:0035556">
    <property type="term" value="P:intracellular signal transduction"/>
    <property type="evidence" value="ECO:0000318"/>
    <property type="project" value="GO_Central"/>
</dbReference>
<dbReference type="GO" id="GO:0045445">
    <property type="term" value="P:myoblast differentiation"/>
    <property type="evidence" value="ECO:0000266"/>
    <property type="project" value="RGD"/>
</dbReference>
<dbReference type="GO" id="GO:0045786">
    <property type="term" value="P:negative regulation of cell cycle"/>
    <property type="evidence" value="ECO:0000314"/>
    <property type="project" value="UniProtKB"/>
</dbReference>
<dbReference type="CDD" id="cd07880">
    <property type="entry name" value="STKc_p38gamma"/>
    <property type="match status" value="1"/>
</dbReference>
<dbReference type="FunFam" id="1.10.510.10:FF:000170">
    <property type="entry name" value="Mitogen-activated protein kinase"/>
    <property type="match status" value="1"/>
</dbReference>
<dbReference type="FunFam" id="3.30.200.20:FF:000769">
    <property type="entry name" value="Mitogen-activated protein kinase 14"/>
    <property type="match status" value="1"/>
</dbReference>
<dbReference type="Gene3D" id="3.30.200.20">
    <property type="entry name" value="Phosphorylase Kinase, domain 1"/>
    <property type="match status" value="1"/>
</dbReference>
<dbReference type="Gene3D" id="1.10.510.10">
    <property type="entry name" value="Transferase(Phosphotransferase) domain 1"/>
    <property type="match status" value="1"/>
</dbReference>
<dbReference type="InterPro" id="IPR011009">
    <property type="entry name" value="Kinase-like_dom_sf"/>
</dbReference>
<dbReference type="InterPro" id="IPR050117">
    <property type="entry name" value="MAP_kinase"/>
</dbReference>
<dbReference type="InterPro" id="IPR003527">
    <property type="entry name" value="MAP_kinase_CS"/>
</dbReference>
<dbReference type="InterPro" id="IPR038786">
    <property type="entry name" value="MAPK12"/>
</dbReference>
<dbReference type="InterPro" id="IPR008352">
    <property type="entry name" value="MAPK_p38-like"/>
</dbReference>
<dbReference type="InterPro" id="IPR000719">
    <property type="entry name" value="Prot_kinase_dom"/>
</dbReference>
<dbReference type="InterPro" id="IPR017441">
    <property type="entry name" value="Protein_kinase_ATP_BS"/>
</dbReference>
<dbReference type="PANTHER" id="PTHR24055">
    <property type="entry name" value="MITOGEN-ACTIVATED PROTEIN KINASE"/>
    <property type="match status" value="1"/>
</dbReference>
<dbReference type="Pfam" id="PF00069">
    <property type="entry name" value="Pkinase"/>
    <property type="match status" value="1"/>
</dbReference>
<dbReference type="PRINTS" id="PR01773">
    <property type="entry name" value="P38MAPKINASE"/>
</dbReference>
<dbReference type="SMART" id="SM00220">
    <property type="entry name" value="S_TKc"/>
    <property type="match status" value="1"/>
</dbReference>
<dbReference type="SUPFAM" id="SSF56112">
    <property type="entry name" value="Protein kinase-like (PK-like)"/>
    <property type="match status" value="1"/>
</dbReference>
<dbReference type="PROSITE" id="PS01351">
    <property type="entry name" value="MAPK"/>
    <property type="match status" value="1"/>
</dbReference>
<dbReference type="PROSITE" id="PS00107">
    <property type="entry name" value="PROTEIN_KINASE_ATP"/>
    <property type="match status" value="1"/>
</dbReference>
<dbReference type="PROSITE" id="PS50011">
    <property type="entry name" value="PROTEIN_KINASE_DOM"/>
    <property type="match status" value="1"/>
</dbReference>
<keyword id="KW-0067">ATP-binding</keyword>
<keyword id="KW-0131">Cell cycle</keyword>
<keyword id="KW-0963">Cytoplasm</keyword>
<keyword id="KW-0418">Kinase</keyword>
<keyword id="KW-0460">Magnesium</keyword>
<keyword id="KW-0479">Metal-binding</keyword>
<keyword id="KW-0496">Mitochondrion</keyword>
<keyword id="KW-0547">Nucleotide-binding</keyword>
<keyword id="KW-0539">Nucleus</keyword>
<keyword id="KW-0597">Phosphoprotein</keyword>
<keyword id="KW-1185">Reference proteome</keyword>
<keyword id="KW-0723">Serine/threonine-protein kinase</keyword>
<keyword id="KW-0346">Stress response</keyword>
<keyword id="KW-0804">Transcription</keyword>
<keyword id="KW-0805">Transcription regulation</keyword>
<keyword id="KW-0808">Transferase</keyword>
<keyword id="KW-0832">Ubl conjugation</keyword>
<feature type="chain" id="PRO_0000186284" description="Mitogen-activated protein kinase 12">
    <location>
        <begin position="1"/>
        <end position="367"/>
    </location>
</feature>
<feature type="domain" description="Protein kinase" evidence="3">
    <location>
        <begin position="27"/>
        <end position="311"/>
    </location>
</feature>
<feature type="short sequence motif" description="TXY">
    <location>
        <begin position="183"/>
        <end position="185"/>
    </location>
</feature>
<feature type="active site" description="Proton acceptor" evidence="3">
    <location>
        <position position="153"/>
    </location>
</feature>
<feature type="binding site" evidence="3">
    <location>
        <begin position="33"/>
        <end position="41"/>
    </location>
    <ligand>
        <name>ATP</name>
        <dbReference type="ChEBI" id="CHEBI:30616"/>
    </ligand>
</feature>
<feature type="binding site" evidence="3">
    <location>
        <position position="56"/>
    </location>
    <ligand>
        <name>ATP</name>
        <dbReference type="ChEBI" id="CHEBI:30616"/>
    </ligand>
</feature>
<feature type="modified residue" description="Phosphothreonine; by MAP2K3 and MAP2K6" evidence="4">
    <location>
        <position position="183"/>
    </location>
</feature>
<feature type="modified residue" description="Phosphotyrosine; by MAP2K3 and MAP2K6" evidence="4">
    <location>
        <position position="185"/>
    </location>
</feature>
<feature type="mutagenesis site" description="Loss of kinase activity." evidence="4">
    <original>T</original>
    <variation>A</variation>
    <location>
        <position position="183"/>
    </location>
</feature>
<feature type="mutagenesis site" description="Loss of kinase activity." evidence="4">
    <original>Y</original>
    <variation>A</variation>
    <location>
        <position position="185"/>
    </location>
</feature>
<organism>
    <name type="scientific">Rattus norvegicus</name>
    <name type="common">Rat</name>
    <dbReference type="NCBI Taxonomy" id="10116"/>
    <lineage>
        <taxon>Eukaryota</taxon>
        <taxon>Metazoa</taxon>
        <taxon>Chordata</taxon>
        <taxon>Craniata</taxon>
        <taxon>Vertebrata</taxon>
        <taxon>Euteleostomi</taxon>
        <taxon>Mammalia</taxon>
        <taxon>Eutheria</taxon>
        <taxon>Euarchontoglires</taxon>
        <taxon>Glires</taxon>
        <taxon>Rodentia</taxon>
        <taxon>Myomorpha</taxon>
        <taxon>Muroidea</taxon>
        <taxon>Muridae</taxon>
        <taxon>Murinae</taxon>
        <taxon>Rattus</taxon>
    </lineage>
</organism>
<sequence>MSSPPPARKGFYRQEVTKTAWEVRAVYQDLQPVGSGAYGAVCSAVDSRTGNKVAIKKLYRPFQSELFAKRAYRELRLLKHMRHENVIGLLDVFTPDETLDDFTDFYLVMPFMGTDLGKLMKHETLSEDRIQFLVYQMLKGLKYIHAAGVIHRDLKPGNLAVNEDCELKILDFGLARQADSEMTGYVVTRWYRAPEVILNWMRYTQTVDIWSVGCIMAEMITGKILFKGNDHLDQLKEIMKVTGTPPPEFVQKLQSAEAKNYMEGLPELEKKDFASVLTNASPQAVNLLEKMLVLDAEQRVTAAEALAHPYFESLRDTEDEPKAQKYDDSFDDVDRTLEEWKRVTYKEVLSFKPPRQLGARVPKETAL</sequence>
<name>MK12_RAT</name>
<gene>
    <name type="primary">Mapk12</name>
    <name type="synonym">Sapk3</name>
</gene>
<comment type="function">
    <text evidence="4 8">Serine/threonine kinase which acts as an essential component of the MAP kinase signal transduction pathway. MAPK12 is one of the four p38 MAPKs which play an important role in the cascades of cellular responses evoked by extracellular stimuli such as pro-inflammatory cytokines or physical stress leading to direct activation of transcription factors such as ELK1 and ATF2. Accordingly, p38 MAPKs phosphorylate a broad range of proteins and it has been estimated that they may have approximately 200 to 300 substrates each. Some of the targets are downstream kinases such as MAPKAPK2, which are activated through phosphorylation and further phosphorylate additional targets. Plays a role in myoblast differentiation and also in the down-regulation of cyclin D1 in response to hypoxia in adrenal cells suggesting MAPK12 may inhibit cell proliferation while promoting differentiation. Phosphorylates DLG1. Following osmotic shock, MAPK12 in the cell nucleus increases its association with nuclear DLG1, thereby causing dissociation of DLG1-SFPQ complexes. This function is independent of its catalytic activity and could affect mRNA processing and/or gene transcription to aid cell adaptation to osmolarity changes in the environment. Regulates UV-induced checkpoint signaling and repair of UV-induced DNA damage and G2 arrest after gamma-radiation exposure. MAPK12 is involved in the regulation of SLC2A1 expression and basal glucose uptake in L6 myotubes; and negatively regulates SLC2A4 expression and contraction-mediated glucose uptake in adult skeletal muscle. C-Jun (JUN) phosphorylation is stimulated by MAPK14 and inhibited by MAPK12, leading to a distinct AP-1 regulation. MAPK12 is required for the normal kinetochore localization of PLK1, prevents chromosomal instability and supports mitotic cell viability. MAPK12-signaling is also positively regulating the expansion of transient amplifying myogenic precursor cells during muscle growth and regeneration.</text>
</comment>
<comment type="catalytic activity">
    <reaction>
        <text>L-seryl-[protein] + ATP = O-phospho-L-seryl-[protein] + ADP + H(+)</text>
        <dbReference type="Rhea" id="RHEA:17989"/>
        <dbReference type="Rhea" id="RHEA-COMP:9863"/>
        <dbReference type="Rhea" id="RHEA-COMP:11604"/>
        <dbReference type="ChEBI" id="CHEBI:15378"/>
        <dbReference type="ChEBI" id="CHEBI:29999"/>
        <dbReference type="ChEBI" id="CHEBI:30616"/>
        <dbReference type="ChEBI" id="CHEBI:83421"/>
        <dbReference type="ChEBI" id="CHEBI:456216"/>
        <dbReference type="EC" id="2.7.11.24"/>
    </reaction>
</comment>
<comment type="catalytic activity">
    <reaction>
        <text>L-threonyl-[protein] + ATP = O-phospho-L-threonyl-[protein] + ADP + H(+)</text>
        <dbReference type="Rhea" id="RHEA:46608"/>
        <dbReference type="Rhea" id="RHEA-COMP:11060"/>
        <dbReference type="Rhea" id="RHEA-COMP:11605"/>
        <dbReference type="ChEBI" id="CHEBI:15378"/>
        <dbReference type="ChEBI" id="CHEBI:30013"/>
        <dbReference type="ChEBI" id="CHEBI:30616"/>
        <dbReference type="ChEBI" id="CHEBI:61977"/>
        <dbReference type="ChEBI" id="CHEBI:456216"/>
        <dbReference type="EC" id="2.7.11.24"/>
    </reaction>
</comment>
<comment type="cofactor">
    <cofactor>
        <name>Mg(2+)</name>
        <dbReference type="ChEBI" id="CHEBI:18420"/>
    </cofactor>
    <text>Binds 2 magnesium ions.</text>
</comment>
<comment type="activity regulation">
    <text evidence="7">Activated by phosphorylation on threonine and tyrosine. MAP2K3/MKK3 and MAP2K6/MKK6 are both essential for the activation of MAPK12 induced by environmental stress, whereas MAP2K6/MKK6 is the major MAPK12 activator in response to TNF-alpha.</text>
</comment>
<comment type="subunit">
    <text evidence="2 6 7 8">Monomer. Interacts with the PDZ domain of the syntrophin SNTA1. Interacts with LIN7C, SCRIB, SYNJ2BP and SH3BP5. Interacts with PTPN4; this interaction induces the activation of PTPN4 phosphatase activity.</text>
</comment>
<comment type="interaction">
    <interactant intactId="EBI-783937">
        <id>Q63538</id>
    </interactant>
    <interactant intactId="EBI-717191">
        <id>Q13424</id>
        <label>SNTA1</label>
    </interactant>
    <organismsDiffer>true</organismsDiffer>
    <experiments>5</experiments>
</comment>
<comment type="subcellular location">
    <subcellularLocation>
        <location>Cytoplasm</location>
    </subcellularLocation>
    <subcellularLocation>
        <location evidence="1">Nucleus</location>
    </subcellularLocation>
    <subcellularLocation>
        <location>Mitochondrion</location>
    </subcellularLocation>
    <text>Mitochondrial when associated with SH3BP5. In skeletal muscle colocalizes with SNTA1 at the neuromuscular junction and throughout the sarcolemma.</text>
</comment>
<comment type="tissue specificity">
    <text evidence="5">Highly expressed in skeletal muscle, lung and testes and also in the heart and thymus of both adult and neonatal rats.</text>
</comment>
<comment type="domain">
    <text>The TXY motif contains the threonine and tyrosine residues whose phosphorylation activates the MAP kinases.</text>
</comment>
<comment type="PTM">
    <text evidence="4">Dually phosphorylated on Thr-183 and Tyr-185 by MAP2K3/MKK3 and MAP2K6/MKK6, which activates the enzyme.</text>
</comment>
<comment type="PTM">
    <text evidence="1">Ubiquitinated. Ubiquitination leads to degradation by the proteasome pathway (By similarity).</text>
</comment>
<comment type="similarity">
    <text evidence="9">Belongs to the protein kinase superfamily. CMGC Ser/Thr protein kinase family. MAP kinase subfamily.</text>
</comment>
<reference key="1">
    <citation type="journal article" date="1996" name="FEBS Lett.">
        <title>SAP kinase-3, a new member of the family of mammalian stress-activated protein kinases.</title>
        <authorList>
            <person name="Mertens S."/>
            <person name="Craxton M."/>
            <person name="Goedert M."/>
        </authorList>
    </citation>
    <scope>NUCLEOTIDE SEQUENCE [MRNA]</scope>
    <source>
        <tissue>Skeletal muscle</tissue>
    </source>
</reference>
<reference key="2">
    <citation type="journal article" date="2009" name="Cell">
        <title>Regulation of PKD by the MAPK p38delta in insulin secretion and glucose homeostasis.</title>
        <authorList>
            <person name="Sumara G."/>
            <person name="Formentini I."/>
            <person name="Collins S."/>
            <person name="Sumara I."/>
            <person name="Windak R."/>
            <person name="Bodenmiller B."/>
            <person name="Ramracheya R."/>
            <person name="Caille D."/>
            <person name="Jiang H."/>
            <person name="Platt K.A."/>
            <person name="Meda P."/>
            <person name="Aebersold R."/>
            <person name="Rorsman P."/>
            <person name="Ricci R."/>
        </authorList>
    </citation>
    <scope>INTERACTION WITH SNTA1</scope>
    <scope>FUNCTION IN PHOSPHORYLATION OF SNTA1</scope>
    <scope>SUBCELLULAR LOCATION</scope>
</reference>
<reference key="3">
    <citation type="journal article" date="1999" name="J. Biol. Chem.">
        <title>Selective activation of p38alpha and p38gamma by hypoxia. Role in regulation of cyclin D1 by hypoxia in PC12 cells.</title>
        <authorList>
            <person name="Conrad P.W."/>
            <person name="Rust R.T."/>
            <person name="Han J."/>
            <person name="Millhorn D.E."/>
            <person name="Beitner-Johnson D."/>
        </authorList>
    </citation>
    <scope>FUNCTION</scope>
    <scope>PHOSPHORYLATION AT THR-183 AND TYR-185</scope>
    <scope>MUTAGENESIS OF THR-183 AND TYR-185</scope>
</reference>
<reference key="4">
    <citation type="journal article" date="2002" name="J. Mol. Cell. Cardiol.">
        <title>Cardiac expression and subcellular localization of the p38 mitogen-activated protein kinase member, stress-activated protein kinase-3 (SAPK3).</title>
        <authorList>
            <person name="Court N.W."/>
            <person name="dos Remedios C.G."/>
            <person name="Cordell J."/>
            <person name="Bogoyevitch M.A."/>
        </authorList>
    </citation>
    <scope>SUBCELLULAR LOCATION</scope>
    <scope>TISSUE SPECIFICITY</scope>
</reference>
<reference key="5">
    <citation type="journal article" date="2004" name="Biochem. Biophys. Res. Commun.">
        <title>Phosphorylation of the mitochondrial protein Sab by stress-activated protein kinase 3.</title>
        <authorList>
            <person name="Court N.W."/>
            <person name="Kuo I."/>
            <person name="Quigley O."/>
            <person name="Bogoyevitch M.A."/>
        </authorList>
    </citation>
    <scope>SUBCELLULAR LOCATION</scope>
    <scope>INTERACTION WITH SH3BP5</scope>
</reference>
<reference key="6">
    <citation type="journal article" date="2005" name="Biochim. Biophys. Acta">
        <title>Outer membrane protein 25-a mitochondrial anchor and inhibitor of stress-activated protein kinase-3.</title>
        <authorList>
            <person name="Court N.W."/>
            <person name="Ingley E."/>
            <person name="Klinken S.P."/>
            <person name="Bogoyevitch M.A."/>
        </authorList>
    </citation>
    <scope>INTERACTION WITH LIN7C; SCRIB AND SYNJ2BP</scope>
    <scope>ACTIVITY REGULATION</scope>
</reference>
<reference key="7">
    <citation type="journal article" date="2010" name="Biochem. J.">
        <title>Mechanisms and functions of p38 MAPK signalling.</title>
        <authorList>
            <person name="Cuadrado A."/>
            <person name="Nebreda A.R."/>
        </authorList>
    </citation>
    <scope>REVIEW ON ACTIVITY REGULATION</scope>
    <scope>REVIEW ON FUNCTION</scope>
</reference>
<reference key="8">
    <citation type="journal article" date="2012" name="Nat. Commun.">
        <title>Quantitative maps of protein phosphorylation sites across 14 different rat organs and tissues.</title>
        <authorList>
            <person name="Lundby A."/>
            <person name="Secher A."/>
            <person name="Lage K."/>
            <person name="Nordsborg N.B."/>
            <person name="Dmytriyev A."/>
            <person name="Lundby C."/>
            <person name="Olsen J.V."/>
        </authorList>
    </citation>
    <scope>IDENTIFICATION BY MASS SPECTROMETRY [LARGE SCALE ANALYSIS]</scope>
</reference>